<keyword id="KW-0012">Acyltransferase</keyword>
<keyword id="KW-1003">Cell membrane</keyword>
<keyword id="KW-0963">Cytoplasm</keyword>
<keyword id="KW-0256">Endoplasmic reticulum</keyword>
<keyword id="KW-0333">Golgi apparatus</keyword>
<keyword id="KW-0449">Lipoprotein</keyword>
<keyword id="KW-0472">Membrane</keyword>
<keyword id="KW-0479">Metal-binding</keyword>
<keyword id="KW-0564">Palmitate</keyword>
<keyword id="KW-0597">Phosphoprotein</keyword>
<keyword id="KW-1185">Reference proteome</keyword>
<keyword id="KW-0808">Transferase</keyword>
<keyword id="KW-0812">Transmembrane</keyword>
<keyword id="KW-1133">Transmembrane helix</keyword>
<keyword id="KW-0862">Zinc</keyword>
<accession>F1Q7H8</accession>
<accession>A4FVK6</accession>
<accession>Q05AL0</accession>
<evidence type="ECO:0000250" key="1">
    <source>
        <dbReference type="UniProtKB" id="Q5W0Z9"/>
    </source>
</evidence>
<evidence type="ECO:0000255" key="2"/>
<evidence type="ECO:0000255" key="3">
    <source>
        <dbReference type="PROSITE-ProRule" id="PRU00067"/>
    </source>
</evidence>
<evidence type="ECO:0000305" key="4"/>
<evidence type="ECO:0000312" key="5">
    <source>
        <dbReference type="ZFIN" id="ZDB-GENE-070424-38"/>
    </source>
</evidence>
<name>ZD20A_DANRE</name>
<gene>
    <name evidence="5" type="primary">zdhhc20a</name>
</gene>
<dbReference type="EC" id="2.3.1.225" evidence="1"/>
<dbReference type="EC" id="2.3.1.-" evidence="1"/>
<dbReference type="EMBL" id="CR376845">
    <property type="status" value="NOT_ANNOTATED_CDS"/>
    <property type="molecule type" value="Genomic_DNA"/>
</dbReference>
<dbReference type="EMBL" id="CR925771">
    <property type="status" value="NOT_ANNOTATED_CDS"/>
    <property type="molecule type" value="Genomic_DNA"/>
</dbReference>
<dbReference type="EMBL" id="BC124427">
    <property type="protein sequence ID" value="AAI24428.1"/>
    <property type="molecule type" value="mRNA"/>
</dbReference>
<dbReference type="EMBL" id="BC134069">
    <property type="protein sequence ID" value="AAI34070.1"/>
    <property type="molecule type" value="mRNA"/>
</dbReference>
<dbReference type="RefSeq" id="NP_001077018.1">
    <property type="nucleotide sequence ID" value="NM_001083549.1"/>
</dbReference>
<dbReference type="SMR" id="F1Q7H8"/>
<dbReference type="FunCoup" id="F1Q7H8">
    <property type="interactions" value="1587"/>
</dbReference>
<dbReference type="STRING" id="7955.ENSDARP00000071840"/>
<dbReference type="PaxDb" id="7955-ENSDARP00000071840"/>
<dbReference type="Ensembl" id="ENSDART00000077373">
    <property type="protein sequence ID" value="ENSDARP00000071840"/>
    <property type="gene ID" value="ENSDARG00000055066"/>
</dbReference>
<dbReference type="GeneID" id="561776"/>
<dbReference type="KEGG" id="dre:561776"/>
<dbReference type="AGR" id="ZFIN:ZDB-GENE-070424-38"/>
<dbReference type="CTD" id="561776"/>
<dbReference type="ZFIN" id="ZDB-GENE-070424-38">
    <property type="gene designation" value="zdhhc20a"/>
</dbReference>
<dbReference type="eggNOG" id="KOG1315">
    <property type="taxonomic scope" value="Eukaryota"/>
</dbReference>
<dbReference type="HOGENOM" id="CLU_027721_1_3_1"/>
<dbReference type="InParanoid" id="F1Q7H8"/>
<dbReference type="OMA" id="HIFLTMF"/>
<dbReference type="OrthoDB" id="9909019at2759"/>
<dbReference type="PhylomeDB" id="F1Q7H8"/>
<dbReference type="TreeFam" id="TF316044"/>
<dbReference type="PRO" id="PR:F1Q7H8"/>
<dbReference type="Proteomes" id="UP000000437">
    <property type="component" value="Chromosome 10"/>
</dbReference>
<dbReference type="Bgee" id="ENSDARG00000055066">
    <property type="expression patterns" value="Expressed in retina and 19 other cell types or tissues"/>
</dbReference>
<dbReference type="GO" id="GO:0005783">
    <property type="term" value="C:endoplasmic reticulum"/>
    <property type="evidence" value="ECO:0000318"/>
    <property type="project" value="GO_Central"/>
</dbReference>
<dbReference type="GO" id="GO:0005789">
    <property type="term" value="C:endoplasmic reticulum membrane"/>
    <property type="evidence" value="ECO:0007669"/>
    <property type="project" value="UniProtKB-SubCell"/>
</dbReference>
<dbReference type="GO" id="GO:0033116">
    <property type="term" value="C:endoplasmic reticulum-Golgi intermediate compartment membrane"/>
    <property type="evidence" value="ECO:0007669"/>
    <property type="project" value="UniProtKB-SubCell"/>
</dbReference>
<dbReference type="GO" id="GO:0005794">
    <property type="term" value="C:Golgi apparatus"/>
    <property type="evidence" value="ECO:0000318"/>
    <property type="project" value="GO_Central"/>
</dbReference>
<dbReference type="GO" id="GO:0000139">
    <property type="term" value="C:Golgi membrane"/>
    <property type="evidence" value="ECO:0007669"/>
    <property type="project" value="UniProtKB-SubCell"/>
</dbReference>
<dbReference type="GO" id="GO:0048471">
    <property type="term" value="C:perinuclear region of cytoplasm"/>
    <property type="evidence" value="ECO:0007669"/>
    <property type="project" value="UniProtKB-SubCell"/>
</dbReference>
<dbReference type="GO" id="GO:0005886">
    <property type="term" value="C:plasma membrane"/>
    <property type="evidence" value="ECO:0007669"/>
    <property type="project" value="UniProtKB-SubCell"/>
</dbReference>
<dbReference type="GO" id="GO:0046872">
    <property type="term" value="F:metal ion binding"/>
    <property type="evidence" value="ECO:0007669"/>
    <property type="project" value="UniProtKB-KW"/>
</dbReference>
<dbReference type="GO" id="GO:0019705">
    <property type="term" value="F:protein-cysteine S-myristoyltransferase activity"/>
    <property type="evidence" value="ECO:0007669"/>
    <property type="project" value="RHEA"/>
</dbReference>
<dbReference type="GO" id="GO:0019706">
    <property type="term" value="F:protein-cysteine S-palmitoyltransferase activity"/>
    <property type="evidence" value="ECO:0000250"/>
    <property type="project" value="UniProtKB"/>
</dbReference>
<dbReference type="GO" id="GO:0140439">
    <property type="term" value="F:protein-cysteine S-stearoyltransferase activity"/>
    <property type="evidence" value="ECO:0007669"/>
    <property type="project" value="RHEA"/>
</dbReference>
<dbReference type="GO" id="GO:0018345">
    <property type="term" value="P:protein palmitoylation"/>
    <property type="evidence" value="ECO:0000250"/>
    <property type="project" value="UniProtKB"/>
</dbReference>
<dbReference type="GO" id="GO:0006612">
    <property type="term" value="P:protein targeting to membrane"/>
    <property type="evidence" value="ECO:0000318"/>
    <property type="project" value="GO_Central"/>
</dbReference>
<dbReference type="GO" id="GO:0016188">
    <property type="term" value="P:synaptic vesicle maturation"/>
    <property type="evidence" value="ECO:0000318"/>
    <property type="project" value="GO_Central"/>
</dbReference>
<dbReference type="InterPro" id="IPR001594">
    <property type="entry name" value="Palmitoyltrfase_DHHC"/>
</dbReference>
<dbReference type="InterPro" id="IPR039859">
    <property type="entry name" value="PFA4/ZDH16/20/ERF2-like"/>
</dbReference>
<dbReference type="PANTHER" id="PTHR12246">
    <property type="entry name" value="PALMITOYLTRANSFERASE ZDHHC16"/>
    <property type="match status" value="1"/>
</dbReference>
<dbReference type="Pfam" id="PF01529">
    <property type="entry name" value="DHHC"/>
    <property type="match status" value="1"/>
</dbReference>
<dbReference type="PROSITE" id="PS50216">
    <property type="entry name" value="DHHC"/>
    <property type="match status" value="1"/>
</dbReference>
<organism>
    <name type="scientific">Danio rerio</name>
    <name type="common">Zebrafish</name>
    <name type="synonym">Brachydanio rerio</name>
    <dbReference type="NCBI Taxonomy" id="7955"/>
    <lineage>
        <taxon>Eukaryota</taxon>
        <taxon>Metazoa</taxon>
        <taxon>Chordata</taxon>
        <taxon>Craniata</taxon>
        <taxon>Vertebrata</taxon>
        <taxon>Euteleostomi</taxon>
        <taxon>Actinopterygii</taxon>
        <taxon>Neopterygii</taxon>
        <taxon>Teleostei</taxon>
        <taxon>Ostariophysi</taxon>
        <taxon>Cypriniformes</taxon>
        <taxon>Danionidae</taxon>
        <taxon>Danioninae</taxon>
        <taxon>Danio</taxon>
    </lineage>
</organism>
<feature type="chain" id="PRO_0000451127" description="Palmitoyltransferase ZDHHC20-A">
    <location>
        <begin position="1"/>
        <end position="357"/>
    </location>
</feature>
<feature type="topological domain" description="Cytoplasmic" evidence="1">
    <location>
        <begin position="1"/>
        <end position="14"/>
    </location>
</feature>
<feature type="transmembrane region" description="Helical" evidence="1">
    <location>
        <begin position="15"/>
        <end position="35"/>
    </location>
</feature>
<feature type="topological domain" description="Lumenal" evidence="1">
    <location>
        <begin position="36"/>
        <end position="50"/>
    </location>
</feature>
<feature type="transmembrane region" description="Helical" evidence="1">
    <location>
        <begin position="51"/>
        <end position="71"/>
    </location>
</feature>
<feature type="topological domain" description="Cytoplasmic" evidence="1">
    <location>
        <begin position="72"/>
        <end position="166"/>
    </location>
</feature>
<feature type="transmembrane region" description="Helical" evidence="1">
    <location>
        <begin position="167"/>
        <end position="187"/>
    </location>
</feature>
<feature type="topological domain" description="Lumenal" evidence="1">
    <location>
        <begin position="188"/>
        <end position="204"/>
    </location>
</feature>
<feature type="transmembrane region" description="Helical" evidence="1">
    <location>
        <begin position="205"/>
        <end position="228"/>
    </location>
</feature>
<feature type="topological domain" description="Cytoplasmic" evidence="1">
    <location>
        <begin position="229"/>
        <end position="357"/>
    </location>
</feature>
<feature type="domain" description="DHHC" evidence="3">
    <location>
        <begin position="123"/>
        <end position="173"/>
    </location>
</feature>
<feature type="active site" description="S-palmitoyl cysteine intermediate" evidence="3">
    <location>
        <position position="153"/>
    </location>
</feature>
<feature type="sequence conflict" description="In Ref. 2; AAI34070." evidence="4" ref="2">
    <original>N</original>
    <variation>S</variation>
    <location>
        <position position="44"/>
    </location>
</feature>
<feature type="sequence conflict" description="In Ref. 2; AAI24428." evidence="4" ref="2">
    <original>A</original>
    <variation>G</variation>
    <location>
        <position position="57"/>
    </location>
</feature>
<feature type="sequence conflict" description="In Ref. 2; AAI24428." evidence="4" ref="2">
    <original>R</original>
    <variation>H</variation>
    <location>
        <position position="261"/>
    </location>
</feature>
<sequence>MAPSHAVRCCQRGLSWIPVIFINLVVCWSYYAYVVELCIYTIPNVNEQVIYLVVFHAFFFMFMWSYWKTISSKPTNPSKEFCLPKAEKELYEKEERPEAQQDILKRVARELPIYTFTGSGAIRYCDRCQLIKPDRCHHCSTCDKCVLKMDHHCPWVNNCVGFSNYKFFVLFLAYSMLYCVYIAATVLQYFIKFWTNQLPDTHAKFHVLFLFFVAAMFFISILSLFSYHLWLVGKNRTTIEAFRAPVFRNGPDKNGFTLGFRKNITQVFGDQKKYWCLPIFSSLGDGYTFPTRLVTVDVEHGNIEHQTIKCTVDGQTNARPLSESQNHLLCNDEGQKDSSMAAIEVCQPVCVTLENES</sequence>
<comment type="function">
    <text evidence="1">Palmitoyltransferase that could catalyze the addition of palmitate onto various protein substrates. Catalyzes palmitoylation of Cys residues on protein substrates and has a preference for acyl-CoA with C16 fatty acid chains but may also utilize acyl-CoA with C14 and C18 fatty acid chains.</text>
</comment>
<comment type="catalytic activity">
    <reaction evidence="1">
        <text>L-cysteinyl-[protein] + hexadecanoyl-CoA = S-hexadecanoyl-L-cysteinyl-[protein] + CoA</text>
        <dbReference type="Rhea" id="RHEA:36683"/>
        <dbReference type="Rhea" id="RHEA-COMP:10131"/>
        <dbReference type="Rhea" id="RHEA-COMP:11032"/>
        <dbReference type="ChEBI" id="CHEBI:29950"/>
        <dbReference type="ChEBI" id="CHEBI:57287"/>
        <dbReference type="ChEBI" id="CHEBI:57379"/>
        <dbReference type="ChEBI" id="CHEBI:74151"/>
        <dbReference type="EC" id="2.3.1.225"/>
    </reaction>
    <physiologicalReaction direction="left-to-right" evidence="1">
        <dbReference type="Rhea" id="RHEA:36684"/>
    </physiologicalReaction>
</comment>
<comment type="catalytic activity">
    <reaction evidence="1">
        <text>L-cysteinyl-[protein] + tetradecanoyl-CoA = S-tetradecanoyl-L-cysteinyl-[protein] + CoA</text>
        <dbReference type="Rhea" id="RHEA:59736"/>
        <dbReference type="Rhea" id="RHEA-COMP:10131"/>
        <dbReference type="Rhea" id="RHEA-COMP:15433"/>
        <dbReference type="ChEBI" id="CHEBI:29950"/>
        <dbReference type="ChEBI" id="CHEBI:57287"/>
        <dbReference type="ChEBI" id="CHEBI:57385"/>
        <dbReference type="ChEBI" id="CHEBI:143199"/>
    </reaction>
    <physiologicalReaction direction="left-to-right" evidence="1">
        <dbReference type="Rhea" id="RHEA:59737"/>
    </physiologicalReaction>
</comment>
<comment type="catalytic activity">
    <reaction evidence="1">
        <text>L-cysteinyl-[protein] + octadecanoyl-CoA = S-octadecanoyl-L-cysteinyl-[protein] + CoA</text>
        <dbReference type="Rhea" id="RHEA:59740"/>
        <dbReference type="Rhea" id="RHEA-COMP:10131"/>
        <dbReference type="Rhea" id="RHEA-COMP:15434"/>
        <dbReference type="ChEBI" id="CHEBI:29950"/>
        <dbReference type="ChEBI" id="CHEBI:57287"/>
        <dbReference type="ChEBI" id="CHEBI:57394"/>
        <dbReference type="ChEBI" id="CHEBI:143200"/>
    </reaction>
    <physiologicalReaction direction="left-to-right" evidence="1">
        <dbReference type="Rhea" id="RHEA:59741"/>
    </physiologicalReaction>
</comment>
<comment type="subcellular location">
    <subcellularLocation>
        <location evidence="1">Golgi apparatus membrane</location>
        <topology evidence="1">Multi-pass membrane protein</topology>
    </subcellularLocation>
    <subcellularLocation>
        <location evidence="1">Cell membrane</location>
        <topology evidence="1">Multi-pass membrane protein</topology>
    </subcellularLocation>
    <subcellularLocation>
        <location evidence="1">Cytoplasm</location>
        <location evidence="1">Perinuclear region</location>
    </subcellularLocation>
    <subcellularLocation>
        <location evidence="1">Endoplasmic reticulum membrane</location>
        <topology evidence="2">Multi-pass membrane protein</topology>
    </subcellularLocation>
    <subcellularLocation>
        <location evidence="1">Endoplasmic reticulum-Golgi intermediate compartment membrane</location>
        <topology evidence="2">Multi-pass membrane protein</topology>
    </subcellularLocation>
</comment>
<comment type="domain">
    <text evidence="1">The DHHC domain is required for palmitoyltransferase activity.</text>
</comment>
<comment type="similarity">
    <text evidence="4">Belongs to the DHHC palmitoyltransferase family.</text>
</comment>
<reference key="1">
    <citation type="journal article" date="2013" name="Nature">
        <title>The zebrafish reference genome sequence and its relationship to the human genome.</title>
        <authorList>
            <person name="Howe K."/>
            <person name="Clark M.D."/>
            <person name="Torroja C.F."/>
            <person name="Torrance J."/>
            <person name="Berthelot C."/>
            <person name="Muffato M."/>
            <person name="Collins J.E."/>
            <person name="Humphray S."/>
            <person name="McLaren K."/>
            <person name="Matthews L."/>
            <person name="McLaren S."/>
            <person name="Sealy I."/>
            <person name="Caccamo M."/>
            <person name="Churcher C."/>
            <person name="Scott C."/>
            <person name="Barrett J.C."/>
            <person name="Koch R."/>
            <person name="Rauch G.J."/>
            <person name="White S."/>
            <person name="Chow W."/>
            <person name="Kilian B."/>
            <person name="Quintais L.T."/>
            <person name="Guerra-Assuncao J.A."/>
            <person name="Zhou Y."/>
            <person name="Gu Y."/>
            <person name="Yen J."/>
            <person name="Vogel J.H."/>
            <person name="Eyre T."/>
            <person name="Redmond S."/>
            <person name="Banerjee R."/>
            <person name="Chi J."/>
            <person name="Fu B."/>
            <person name="Langley E."/>
            <person name="Maguire S.F."/>
            <person name="Laird G.K."/>
            <person name="Lloyd D."/>
            <person name="Kenyon E."/>
            <person name="Donaldson S."/>
            <person name="Sehra H."/>
            <person name="Almeida-King J."/>
            <person name="Loveland J."/>
            <person name="Trevanion S."/>
            <person name="Jones M."/>
            <person name="Quail M."/>
            <person name="Willey D."/>
            <person name="Hunt A."/>
            <person name="Burton J."/>
            <person name="Sims S."/>
            <person name="McLay K."/>
            <person name="Plumb B."/>
            <person name="Davis J."/>
            <person name="Clee C."/>
            <person name="Oliver K."/>
            <person name="Clark R."/>
            <person name="Riddle C."/>
            <person name="Elliot D."/>
            <person name="Threadgold G."/>
            <person name="Harden G."/>
            <person name="Ware D."/>
            <person name="Begum S."/>
            <person name="Mortimore B."/>
            <person name="Kerry G."/>
            <person name="Heath P."/>
            <person name="Phillimore B."/>
            <person name="Tracey A."/>
            <person name="Corby N."/>
            <person name="Dunn M."/>
            <person name="Johnson C."/>
            <person name="Wood J."/>
            <person name="Clark S."/>
            <person name="Pelan S."/>
            <person name="Griffiths G."/>
            <person name="Smith M."/>
            <person name="Glithero R."/>
            <person name="Howden P."/>
            <person name="Barker N."/>
            <person name="Lloyd C."/>
            <person name="Stevens C."/>
            <person name="Harley J."/>
            <person name="Holt K."/>
            <person name="Panagiotidis G."/>
            <person name="Lovell J."/>
            <person name="Beasley H."/>
            <person name="Henderson C."/>
            <person name="Gordon D."/>
            <person name="Auger K."/>
            <person name="Wright D."/>
            <person name="Collins J."/>
            <person name="Raisen C."/>
            <person name="Dyer L."/>
            <person name="Leung K."/>
            <person name="Robertson L."/>
            <person name="Ambridge K."/>
            <person name="Leongamornlert D."/>
            <person name="McGuire S."/>
            <person name="Gilderthorp R."/>
            <person name="Griffiths C."/>
            <person name="Manthravadi D."/>
            <person name="Nichol S."/>
            <person name="Barker G."/>
            <person name="Whitehead S."/>
            <person name="Kay M."/>
            <person name="Brown J."/>
            <person name="Murnane C."/>
            <person name="Gray E."/>
            <person name="Humphries M."/>
            <person name="Sycamore N."/>
            <person name="Barker D."/>
            <person name="Saunders D."/>
            <person name="Wallis J."/>
            <person name="Babbage A."/>
            <person name="Hammond S."/>
            <person name="Mashreghi-Mohammadi M."/>
            <person name="Barr L."/>
            <person name="Martin S."/>
            <person name="Wray P."/>
            <person name="Ellington A."/>
            <person name="Matthews N."/>
            <person name="Ellwood M."/>
            <person name="Woodmansey R."/>
            <person name="Clark G."/>
            <person name="Cooper J."/>
            <person name="Tromans A."/>
            <person name="Grafham D."/>
            <person name="Skuce C."/>
            <person name="Pandian R."/>
            <person name="Andrews R."/>
            <person name="Harrison E."/>
            <person name="Kimberley A."/>
            <person name="Garnett J."/>
            <person name="Fosker N."/>
            <person name="Hall R."/>
            <person name="Garner P."/>
            <person name="Kelly D."/>
            <person name="Bird C."/>
            <person name="Palmer S."/>
            <person name="Gehring I."/>
            <person name="Berger A."/>
            <person name="Dooley C.M."/>
            <person name="Ersan-Urun Z."/>
            <person name="Eser C."/>
            <person name="Geiger H."/>
            <person name="Geisler M."/>
            <person name="Karotki L."/>
            <person name="Kirn A."/>
            <person name="Konantz J."/>
            <person name="Konantz M."/>
            <person name="Oberlander M."/>
            <person name="Rudolph-Geiger S."/>
            <person name="Teucke M."/>
            <person name="Lanz C."/>
            <person name="Raddatz G."/>
            <person name="Osoegawa K."/>
            <person name="Zhu B."/>
            <person name="Rapp A."/>
            <person name="Widaa S."/>
            <person name="Langford C."/>
            <person name="Yang F."/>
            <person name="Schuster S.C."/>
            <person name="Carter N.P."/>
            <person name="Harrow J."/>
            <person name="Ning Z."/>
            <person name="Herrero J."/>
            <person name="Searle S.M."/>
            <person name="Enright A."/>
            <person name="Geisler R."/>
            <person name="Plasterk R.H."/>
            <person name="Lee C."/>
            <person name="Westerfield M."/>
            <person name="de Jong P.J."/>
            <person name="Zon L.I."/>
            <person name="Postlethwait J.H."/>
            <person name="Nusslein-Volhard C."/>
            <person name="Hubbard T.J."/>
            <person name="Roest Crollius H."/>
            <person name="Rogers J."/>
            <person name="Stemple D.L."/>
        </authorList>
    </citation>
    <scope>NUCLEOTIDE SEQUENCE [LARGE SCALE GENOMIC DNA]</scope>
    <source>
        <strain>Tuebingen</strain>
    </source>
</reference>
<reference key="2">
    <citation type="submission" date="2007-03" db="EMBL/GenBank/DDBJ databases">
        <authorList>
            <consortium name="NIH - Zebrafish Gene Collection (ZGC) project"/>
        </authorList>
    </citation>
    <scope>NUCLEOTIDE SEQUENCE [LARGE SCALE MRNA]</scope>
    <source>
        <tissue>Ovary</tissue>
    </source>
</reference>
<protein>
    <recommendedName>
        <fullName evidence="4">Palmitoyltransferase ZDHHC20-A</fullName>
        <ecNumber evidence="1">2.3.1.225</ecNumber>
    </recommendedName>
    <alternativeName>
        <fullName evidence="1">Acyltransferase ZDHHC20-A</fullName>
        <ecNumber evidence="1">2.3.1.-</ecNumber>
    </alternativeName>
    <alternativeName>
        <fullName evidence="5">Zinc finger DHHC domain-containing protein 20-A</fullName>
    </alternativeName>
</protein>
<proteinExistence type="evidence at transcript level"/>